<sequence length="237" mass="26399">MEHKAPLVEFLGLTFNLSDMLMITITSLIVFIIAVAATRSLQLRPTGMQNFMEWVFDFVRGIINSTMDWQTGGRFLTLGVTLIMYVFVANMLGLPFSVHVNGELWWKSPTADATVTLTLAVMVVGLTHYYGVKMKGASDYLRDYTRPVAWLFPLKIIEEFANTLTLGLRLFGNIYAGEILLGLLASLGTHYGVLGAVGAAIPMMVWQAFSIFVGTIQAFIFTMLTMVYMAHKVSHDH</sequence>
<proteinExistence type="inferred from homology"/>
<organism>
    <name type="scientific">Geobacillus kaustophilus (strain HTA426)</name>
    <dbReference type="NCBI Taxonomy" id="235909"/>
    <lineage>
        <taxon>Bacteria</taxon>
        <taxon>Bacillati</taxon>
        <taxon>Bacillota</taxon>
        <taxon>Bacilli</taxon>
        <taxon>Bacillales</taxon>
        <taxon>Anoxybacillaceae</taxon>
        <taxon>Geobacillus</taxon>
        <taxon>Geobacillus thermoleovorans group</taxon>
    </lineage>
</organism>
<feature type="chain" id="PRO_1000145278" description="ATP synthase subunit a">
    <location>
        <begin position="1"/>
        <end position="237"/>
    </location>
</feature>
<feature type="transmembrane region" description="Helical" evidence="1">
    <location>
        <begin position="17"/>
        <end position="37"/>
    </location>
</feature>
<feature type="transmembrane region" description="Helical" evidence="1">
    <location>
        <begin position="75"/>
        <end position="95"/>
    </location>
</feature>
<feature type="transmembrane region" description="Helical" evidence="1">
    <location>
        <begin position="112"/>
        <end position="132"/>
    </location>
</feature>
<feature type="transmembrane region" description="Helical" evidence="1">
    <location>
        <begin position="179"/>
        <end position="201"/>
    </location>
</feature>
<feature type="transmembrane region" description="Helical" evidence="1">
    <location>
        <begin position="214"/>
        <end position="234"/>
    </location>
</feature>
<dbReference type="EMBL" id="BA000043">
    <property type="protein sequence ID" value="BAD77649.1"/>
    <property type="molecule type" value="Genomic_DNA"/>
</dbReference>
<dbReference type="RefSeq" id="WP_011232831.1">
    <property type="nucleotide sequence ID" value="NC_006510.1"/>
</dbReference>
<dbReference type="SMR" id="Q5KUI7"/>
<dbReference type="STRING" id="235909.GK3364"/>
<dbReference type="GeneID" id="32065248"/>
<dbReference type="KEGG" id="gka:GK3364"/>
<dbReference type="eggNOG" id="COG0356">
    <property type="taxonomic scope" value="Bacteria"/>
</dbReference>
<dbReference type="HOGENOM" id="CLU_041018_2_3_9"/>
<dbReference type="Proteomes" id="UP000001172">
    <property type="component" value="Chromosome"/>
</dbReference>
<dbReference type="GO" id="GO:0005886">
    <property type="term" value="C:plasma membrane"/>
    <property type="evidence" value="ECO:0007669"/>
    <property type="project" value="UniProtKB-SubCell"/>
</dbReference>
<dbReference type="GO" id="GO:0045259">
    <property type="term" value="C:proton-transporting ATP synthase complex"/>
    <property type="evidence" value="ECO:0007669"/>
    <property type="project" value="UniProtKB-KW"/>
</dbReference>
<dbReference type="GO" id="GO:0046933">
    <property type="term" value="F:proton-transporting ATP synthase activity, rotational mechanism"/>
    <property type="evidence" value="ECO:0007669"/>
    <property type="project" value="UniProtKB-UniRule"/>
</dbReference>
<dbReference type="GO" id="GO:0042777">
    <property type="term" value="P:proton motive force-driven plasma membrane ATP synthesis"/>
    <property type="evidence" value="ECO:0007669"/>
    <property type="project" value="TreeGrafter"/>
</dbReference>
<dbReference type="CDD" id="cd00310">
    <property type="entry name" value="ATP-synt_Fo_a_6"/>
    <property type="match status" value="1"/>
</dbReference>
<dbReference type="FunFam" id="1.20.120.220:FF:000005">
    <property type="entry name" value="ATP synthase subunit a"/>
    <property type="match status" value="1"/>
</dbReference>
<dbReference type="Gene3D" id="1.20.120.220">
    <property type="entry name" value="ATP synthase, F0 complex, subunit A"/>
    <property type="match status" value="1"/>
</dbReference>
<dbReference type="HAMAP" id="MF_01393">
    <property type="entry name" value="ATP_synth_a_bact"/>
    <property type="match status" value="1"/>
</dbReference>
<dbReference type="InterPro" id="IPR045082">
    <property type="entry name" value="ATP_syn_F0_a_bact/chloroplast"/>
</dbReference>
<dbReference type="InterPro" id="IPR000568">
    <property type="entry name" value="ATP_synth_F0_asu"/>
</dbReference>
<dbReference type="InterPro" id="IPR023011">
    <property type="entry name" value="ATP_synth_F0_asu_AS"/>
</dbReference>
<dbReference type="InterPro" id="IPR035908">
    <property type="entry name" value="F0_ATP_A_sf"/>
</dbReference>
<dbReference type="NCBIfam" id="TIGR01131">
    <property type="entry name" value="ATP_synt_6_or_A"/>
    <property type="match status" value="1"/>
</dbReference>
<dbReference type="NCBIfam" id="NF004479">
    <property type="entry name" value="PRK05815.1-4"/>
    <property type="match status" value="1"/>
</dbReference>
<dbReference type="PANTHER" id="PTHR42823">
    <property type="entry name" value="ATP SYNTHASE SUBUNIT A, CHLOROPLASTIC"/>
    <property type="match status" value="1"/>
</dbReference>
<dbReference type="PANTHER" id="PTHR42823:SF3">
    <property type="entry name" value="ATP SYNTHASE SUBUNIT A, CHLOROPLASTIC"/>
    <property type="match status" value="1"/>
</dbReference>
<dbReference type="Pfam" id="PF00119">
    <property type="entry name" value="ATP-synt_A"/>
    <property type="match status" value="1"/>
</dbReference>
<dbReference type="PRINTS" id="PR00123">
    <property type="entry name" value="ATPASEA"/>
</dbReference>
<dbReference type="SUPFAM" id="SSF81336">
    <property type="entry name" value="F1F0 ATP synthase subunit A"/>
    <property type="match status" value="1"/>
</dbReference>
<dbReference type="PROSITE" id="PS00449">
    <property type="entry name" value="ATPASE_A"/>
    <property type="match status" value="1"/>
</dbReference>
<reference key="1">
    <citation type="journal article" date="2004" name="Nucleic Acids Res.">
        <title>Thermoadaptation trait revealed by the genome sequence of thermophilic Geobacillus kaustophilus.</title>
        <authorList>
            <person name="Takami H."/>
            <person name="Takaki Y."/>
            <person name="Chee G.-J."/>
            <person name="Nishi S."/>
            <person name="Shimamura S."/>
            <person name="Suzuki H."/>
            <person name="Matsui S."/>
            <person name="Uchiyama I."/>
        </authorList>
    </citation>
    <scope>NUCLEOTIDE SEQUENCE [LARGE SCALE GENOMIC DNA]</scope>
    <source>
        <strain>HTA426</strain>
    </source>
</reference>
<keyword id="KW-0066">ATP synthesis</keyword>
<keyword id="KW-1003">Cell membrane</keyword>
<keyword id="KW-0138">CF(0)</keyword>
<keyword id="KW-0375">Hydrogen ion transport</keyword>
<keyword id="KW-0406">Ion transport</keyword>
<keyword id="KW-0472">Membrane</keyword>
<keyword id="KW-1185">Reference proteome</keyword>
<keyword id="KW-0812">Transmembrane</keyword>
<keyword id="KW-1133">Transmembrane helix</keyword>
<keyword id="KW-0813">Transport</keyword>
<name>ATP6_GEOKA</name>
<accession>Q5KUI7</accession>
<gene>
    <name evidence="1" type="primary">atpB</name>
    <name type="ordered locus">GK3364</name>
</gene>
<comment type="function">
    <text evidence="1">Key component of the proton channel; it plays a direct role in the translocation of protons across the membrane.</text>
</comment>
<comment type="subunit">
    <text evidence="1">F-type ATPases have 2 components, CF(1) - the catalytic core - and CF(0) - the membrane proton channel. CF(1) has five subunits: alpha(3), beta(3), gamma(1), delta(1), epsilon(1). CF(0) has three main subunits: a(1), b(2) and c(9-12). The alpha and beta chains form an alternating ring which encloses part of the gamma chain. CF(1) is attached to CF(0) by a central stalk formed by the gamma and epsilon chains, while a peripheral stalk is formed by the delta and b chains.</text>
</comment>
<comment type="subcellular location">
    <subcellularLocation>
        <location evidence="1">Cell membrane</location>
        <topology evidence="1">Multi-pass membrane protein</topology>
    </subcellularLocation>
</comment>
<comment type="similarity">
    <text evidence="1">Belongs to the ATPase A chain family.</text>
</comment>
<protein>
    <recommendedName>
        <fullName evidence="1">ATP synthase subunit a</fullName>
    </recommendedName>
    <alternativeName>
        <fullName evidence="1">ATP synthase F0 sector subunit a</fullName>
    </alternativeName>
    <alternativeName>
        <fullName evidence="1">F-ATPase subunit 6</fullName>
    </alternativeName>
</protein>
<evidence type="ECO:0000255" key="1">
    <source>
        <dbReference type="HAMAP-Rule" id="MF_01393"/>
    </source>
</evidence>